<name>SYDND_BIFLD</name>
<proteinExistence type="inferred from homology"/>
<keyword id="KW-0030">Aminoacyl-tRNA synthetase</keyword>
<keyword id="KW-0067">ATP-binding</keyword>
<keyword id="KW-0963">Cytoplasm</keyword>
<keyword id="KW-0436">Ligase</keyword>
<keyword id="KW-0547">Nucleotide-binding</keyword>
<keyword id="KW-0648">Protein biosynthesis</keyword>
<evidence type="ECO:0000255" key="1">
    <source>
        <dbReference type="HAMAP-Rule" id="MF_00044"/>
    </source>
</evidence>
<evidence type="ECO:0000256" key="2">
    <source>
        <dbReference type="SAM" id="MobiDB-lite"/>
    </source>
</evidence>
<dbReference type="EC" id="6.1.1.23" evidence="1"/>
<dbReference type="EMBL" id="CP000605">
    <property type="protein sequence ID" value="ACD97464.1"/>
    <property type="molecule type" value="Genomic_DNA"/>
</dbReference>
<dbReference type="RefSeq" id="WP_007053205.1">
    <property type="nucleotide sequence ID" value="NZ_AABM02000018.1"/>
</dbReference>
<dbReference type="SMR" id="B3DPM0"/>
<dbReference type="GeneID" id="69578652"/>
<dbReference type="KEGG" id="blj:BLD_0018"/>
<dbReference type="HOGENOM" id="CLU_014330_3_2_11"/>
<dbReference type="Proteomes" id="UP000002419">
    <property type="component" value="Chromosome"/>
</dbReference>
<dbReference type="GO" id="GO:0005737">
    <property type="term" value="C:cytoplasm"/>
    <property type="evidence" value="ECO:0007669"/>
    <property type="project" value="UniProtKB-SubCell"/>
</dbReference>
<dbReference type="GO" id="GO:0004815">
    <property type="term" value="F:aspartate-tRNA ligase activity"/>
    <property type="evidence" value="ECO:0007669"/>
    <property type="project" value="UniProtKB-UniRule"/>
</dbReference>
<dbReference type="GO" id="GO:0050560">
    <property type="term" value="F:aspartate-tRNA(Asn) ligase activity"/>
    <property type="evidence" value="ECO:0007669"/>
    <property type="project" value="UniProtKB-EC"/>
</dbReference>
<dbReference type="GO" id="GO:0005524">
    <property type="term" value="F:ATP binding"/>
    <property type="evidence" value="ECO:0007669"/>
    <property type="project" value="UniProtKB-UniRule"/>
</dbReference>
<dbReference type="GO" id="GO:0003676">
    <property type="term" value="F:nucleic acid binding"/>
    <property type="evidence" value="ECO:0007669"/>
    <property type="project" value="InterPro"/>
</dbReference>
<dbReference type="GO" id="GO:0006422">
    <property type="term" value="P:aspartyl-tRNA aminoacylation"/>
    <property type="evidence" value="ECO:0007669"/>
    <property type="project" value="UniProtKB-UniRule"/>
</dbReference>
<dbReference type="CDD" id="cd00777">
    <property type="entry name" value="AspRS_core"/>
    <property type="match status" value="1"/>
</dbReference>
<dbReference type="CDD" id="cd04317">
    <property type="entry name" value="EcAspRS_like_N"/>
    <property type="match status" value="1"/>
</dbReference>
<dbReference type="Gene3D" id="3.30.930.10">
    <property type="entry name" value="Bira Bifunctional Protein, Domain 2"/>
    <property type="match status" value="1"/>
</dbReference>
<dbReference type="Gene3D" id="3.30.1360.30">
    <property type="entry name" value="GAD-like domain"/>
    <property type="match status" value="1"/>
</dbReference>
<dbReference type="Gene3D" id="2.40.50.140">
    <property type="entry name" value="Nucleic acid-binding proteins"/>
    <property type="match status" value="1"/>
</dbReference>
<dbReference type="HAMAP" id="MF_00044">
    <property type="entry name" value="Asp_tRNA_synth_type1"/>
    <property type="match status" value="1"/>
</dbReference>
<dbReference type="InterPro" id="IPR004364">
    <property type="entry name" value="Aa-tRNA-synt_II"/>
</dbReference>
<dbReference type="InterPro" id="IPR006195">
    <property type="entry name" value="aa-tRNA-synth_II"/>
</dbReference>
<dbReference type="InterPro" id="IPR045864">
    <property type="entry name" value="aa-tRNA-synth_II/BPL/LPL"/>
</dbReference>
<dbReference type="InterPro" id="IPR004524">
    <property type="entry name" value="Asp-tRNA-ligase_1"/>
</dbReference>
<dbReference type="InterPro" id="IPR047089">
    <property type="entry name" value="Asp-tRNA-ligase_1_N"/>
</dbReference>
<dbReference type="InterPro" id="IPR002312">
    <property type="entry name" value="Asp/Asn-tRNA-synth_IIb"/>
</dbReference>
<dbReference type="InterPro" id="IPR047090">
    <property type="entry name" value="AspRS_core"/>
</dbReference>
<dbReference type="InterPro" id="IPR004115">
    <property type="entry name" value="GAD-like_sf"/>
</dbReference>
<dbReference type="InterPro" id="IPR029351">
    <property type="entry name" value="GAD_dom"/>
</dbReference>
<dbReference type="InterPro" id="IPR012340">
    <property type="entry name" value="NA-bd_OB-fold"/>
</dbReference>
<dbReference type="InterPro" id="IPR004365">
    <property type="entry name" value="NA-bd_OB_tRNA"/>
</dbReference>
<dbReference type="NCBIfam" id="TIGR00459">
    <property type="entry name" value="aspS_bact"/>
    <property type="match status" value="1"/>
</dbReference>
<dbReference type="NCBIfam" id="NF001750">
    <property type="entry name" value="PRK00476.1"/>
    <property type="match status" value="1"/>
</dbReference>
<dbReference type="PANTHER" id="PTHR22594:SF5">
    <property type="entry name" value="ASPARTATE--TRNA LIGASE, MITOCHONDRIAL"/>
    <property type="match status" value="1"/>
</dbReference>
<dbReference type="PANTHER" id="PTHR22594">
    <property type="entry name" value="ASPARTYL/LYSYL-TRNA SYNTHETASE"/>
    <property type="match status" value="1"/>
</dbReference>
<dbReference type="Pfam" id="PF02938">
    <property type="entry name" value="GAD"/>
    <property type="match status" value="1"/>
</dbReference>
<dbReference type="Pfam" id="PF00152">
    <property type="entry name" value="tRNA-synt_2"/>
    <property type="match status" value="1"/>
</dbReference>
<dbReference type="Pfam" id="PF01336">
    <property type="entry name" value="tRNA_anti-codon"/>
    <property type="match status" value="1"/>
</dbReference>
<dbReference type="PRINTS" id="PR01042">
    <property type="entry name" value="TRNASYNTHASP"/>
</dbReference>
<dbReference type="SUPFAM" id="SSF55681">
    <property type="entry name" value="Class II aaRS and biotin synthetases"/>
    <property type="match status" value="1"/>
</dbReference>
<dbReference type="SUPFAM" id="SSF55261">
    <property type="entry name" value="GAD domain-like"/>
    <property type="match status" value="1"/>
</dbReference>
<dbReference type="SUPFAM" id="SSF50249">
    <property type="entry name" value="Nucleic acid-binding proteins"/>
    <property type="match status" value="1"/>
</dbReference>
<dbReference type="PROSITE" id="PS50862">
    <property type="entry name" value="AA_TRNA_LIGASE_II"/>
    <property type="match status" value="1"/>
</dbReference>
<accession>B3DPM0</accession>
<reference key="1">
    <citation type="journal article" date="2008" name="BMC Genomics">
        <title>Comparative genomic analysis of the gut bacterium Bifidobacterium longum reveals loci susceptible to deletion during pure culture growth.</title>
        <authorList>
            <person name="Lee J.H."/>
            <person name="Karamychev V.N."/>
            <person name="Kozyavkin S.A."/>
            <person name="Mills D."/>
            <person name="Pavlov A.R."/>
            <person name="Pavlova N.V."/>
            <person name="Polouchine N.N."/>
            <person name="Richardson P.M."/>
            <person name="Shakhova V.V."/>
            <person name="Slesarev A.I."/>
            <person name="Weimer B."/>
            <person name="O'Sullivan D.J."/>
        </authorList>
    </citation>
    <scope>NUCLEOTIDE SEQUENCE [LARGE SCALE GENOMIC DNA]</scope>
    <source>
        <strain>DJO10A</strain>
    </source>
</reference>
<feature type="chain" id="PRO_1000090961" description="Aspartate--tRNA(Asp/Asn) ligase">
    <location>
        <begin position="1"/>
        <end position="599"/>
    </location>
</feature>
<feature type="region of interest" description="Aspartate" evidence="1">
    <location>
        <begin position="204"/>
        <end position="207"/>
    </location>
</feature>
<feature type="region of interest" description="Disordered" evidence="2">
    <location>
        <begin position="565"/>
        <end position="599"/>
    </location>
</feature>
<feature type="compositionally biased region" description="Acidic residues" evidence="2">
    <location>
        <begin position="590"/>
        <end position="599"/>
    </location>
</feature>
<feature type="binding site" evidence="1">
    <location>
        <position position="180"/>
    </location>
    <ligand>
        <name>L-aspartate</name>
        <dbReference type="ChEBI" id="CHEBI:29991"/>
    </ligand>
</feature>
<feature type="binding site" evidence="1">
    <location>
        <begin position="226"/>
        <end position="228"/>
    </location>
    <ligand>
        <name>ATP</name>
        <dbReference type="ChEBI" id="CHEBI:30616"/>
    </ligand>
</feature>
<feature type="binding site" evidence="1">
    <location>
        <position position="226"/>
    </location>
    <ligand>
        <name>L-aspartate</name>
        <dbReference type="ChEBI" id="CHEBI:29991"/>
    </ligand>
</feature>
<feature type="binding site" evidence="1">
    <location>
        <position position="235"/>
    </location>
    <ligand>
        <name>ATP</name>
        <dbReference type="ChEBI" id="CHEBI:30616"/>
    </ligand>
</feature>
<feature type="binding site" evidence="1">
    <location>
        <position position="457"/>
    </location>
    <ligand>
        <name>L-aspartate</name>
        <dbReference type="ChEBI" id="CHEBI:29991"/>
    </ligand>
</feature>
<feature type="binding site" evidence="1">
    <location>
        <position position="491"/>
    </location>
    <ligand>
        <name>ATP</name>
        <dbReference type="ChEBI" id="CHEBI:30616"/>
    </ligand>
</feature>
<feature type="binding site" evidence="1">
    <location>
        <position position="498"/>
    </location>
    <ligand>
        <name>L-aspartate</name>
        <dbReference type="ChEBI" id="CHEBI:29991"/>
    </ligand>
</feature>
<feature type="binding site" evidence="1">
    <location>
        <begin position="543"/>
        <end position="546"/>
    </location>
    <ligand>
        <name>ATP</name>
        <dbReference type="ChEBI" id="CHEBI:30616"/>
    </ligand>
</feature>
<feature type="site" description="Important for tRNA non-discrimination" evidence="1">
    <location>
        <position position="35"/>
    </location>
</feature>
<feature type="site" description="Important for tRNA non-discrimination" evidence="1">
    <location>
        <position position="81"/>
    </location>
</feature>
<protein>
    <recommendedName>
        <fullName evidence="1">Aspartate--tRNA(Asp/Asn) ligase</fullName>
        <ecNumber evidence="1">6.1.1.23</ecNumber>
    </recommendedName>
    <alternativeName>
        <fullName evidence="1">Aspartyl-tRNA synthetase</fullName>
        <shortName evidence="1">AspRS</shortName>
    </alternativeName>
    <alternativeName>
        <fullName evidence="1">Non-discriminating aspartyl-tRNA synthetase</fullName>
        <shortName evidence="1">ND-AspRS</shortName>
    </alternativeName>
</protein>
<comment type="function">
    <text evidence="1">Aspartyl-tRNA synthetase with relaxed tRNA specificity since it is able to aspartylate not only its cognate tRNA(Asp) but also tRNA(Asn). Reaction proceeds in two steps: L-aspartate is first activated by ATP to form Asp-AMP and then transferred to the acceptor end of tRNA(Asp/Asn).</text>
</comment>
<comment type="catalytic activity">
    <reaction evidence="1">
        <text>tRNA(Asx) + L-aspartate + ATP = L-aspartyl-tRNA(Asx) + AMP + diphosphate</text>
        <dbReference type="Rhea" id="RHEA:18349"/>
        <dbReference type="Rhea" id="RHEA-COMP:9710"/>
        <dbReference type="Rhea" id="RHEA-COMP:9711"/>
        <dbReference type="ChEBI" id="CHEBI:29991"/>
        <dbReference type="ChEBI" id="CHEBI:30616"/>
        <dbReference type="ChEBI" id="CHEBI:33019"/>
        <dbReference type="ChEBI" id="CHEBI:78442"/>
        <dbReference type="ChEBI" id="CHEBI:78516"/>
        <dbReference type="ChEBI" id="CHEBI:456215"/>
        <dbReference type="EC" id="6.1.1.23"/>
    </reaction>
</comment>
<comment type="subunit">
    <text evidence="1">Homodimer.</text>
</comment>
<comment type="subcellular location">
    <subcellularLocation>
        <location evidence="1">Cytoplasm</location>
    </subcellularLocation>
</comment>
<comment type="similarity">
    <text evidence="1">Belongs to the class-II aminoacyl-tRNA synthetase family. Type 1 subfamily.</text>
</comment>
<gene>
    <name evidence="1" type="primary">aspS</name>
    <name type="ordered locus">BLD_0018</name>
</gene>
<sequence>MSQTAYRTHHATEVTEALVGQKVTLAGWVDRRRDHGGVAFIDLRDSTGLVQVVIYDEDMARPLRSEFVIQITGEVRLRPDGNENTHLATGKIEVVAETIEILAKSDALPFQVSTALENESENKLPGEDVRLKYRYLDLRRPSMQHNLKLRSDMAKAARHALEDMDFTEVETPTFIKSTPEGARDFVVPARLVPGSWYALPQSPQLLKQLLMVSGVERYYQLARCYRDEDFRADRQPEFTQLDMEMAYVDQEDVMAMTEKVIAAIWKSAGYEVQLPLPRITWKDAMDKYGSDKPDLRFGNPLVELTEYFKNTPFRVFQAPYVGAVVFKGGAATPRRQFDAWQDWARQRGAKGLAYVVFGENGELKGPVAKNLSDEERNGLREAVGAEEGDAVFFAAGSRESAQLLLGAVRVELASREGLLDPKKFAFTWVVDFPLFKPTDDPDDDDVAVGHSKWTSMHHPFTMPSKDWIDKFDKDPEHAMSDSYDIVCNGEEMGGGSVRIHRDDIQARVLDVLGITKEEADEKFGFLLEAFKYGAPPHAGLALGWDRTVSILAGADSIRDVIAFPKAGGGRDPLTGAPAPISDEQRAETGVDYDPDADEN</sequence>
<organism>
    <name type="scientific">Bifidobacterium longum (strain DJO10A)</name>
    <dbReference type="NCBI Taxonomy" id="205913"/>
    <lineage>
        <taxon>Bacteria</taxon>
        <taxon>Bacillati</taxon>
        <taxon>Actinomycetota</taxon>
        <taxon>Actinomycetes</taxon>
        <taxon>Bifidobacteriales</taxon>
        <taxon>Bifidobacteriaceae</taxon>
        <taxon>Bifidobacterium</taxon>
    </lineage>
</organism>